<keyword id="KW-0067">ATP-binding</keyword>
<keyword id="KW-0143">Chaperone</keyword>
<keyword id="KW-0479">Metal-binding</keyword>
<keyword id="KW-0547">Nucleotide-binding</keyword>
<keyword id="KW-1185">Reference proteome</keyword>
<keyword id="KW-0862">Zinc</keyword>
<dbReference type="EMBL" id="CP000884">
    <property type="protein sequence ID" value="ABX35284.1"/>
    <property type="molecule type" value="Genomic_DNA"/>
</dbReference>
<dbReference type="RefSeq" id="WP_012204530.1">
    <property type="nucleotide sequence ID" value="NC_010002.1"/>
</dbReference>
<dbReference type="SMR" id="A9C1U9"/>
<dbReference type="STRING" id="398578.Daci_2646"/>
<dbReference type="GeneID" id="94693740"/>
<dbReference type="KEGG" id="dac:Daci_2646"/>
<dbReference type="eggNOG" id="COG1219">
    <property type="taxonomic scope" value="Bacteria"/>
</dbReference>
<dbReference type="HOGENOM" id="CLU_014218_8_2_4"/>
<dbReference type="Proteomes" id="UP000000784">
    <property type="component" value="Chromosome"/>
</dbReference>
<dbReference type="GO" id="GO:0009376">
    <property type="term" value="C:HslUV protease complex"/>
    <property type="evidence" value="ECO:0007669"/>
    <property type="project" value="TreeGrafter"/>
</dbReference>
<dbReference type="GO" id="GO:0005524">
    <property type="term" value="F:ATP binding"/>
    <property type="evidence" value="ECO:0007669"/>
    <property type="project" value="UniProtKB-UniRule"/>
</dbReference>
<dbReference type="GO" id="GO:0016887">
    <property type="term" value="F:ATP hydrolysis activity"/>
    <property type="evidence" value="ECO:0007669"/>
    <property type="project" value="InterPro"/>
</dbReference>
<dbReference type="GO" id="GO:0140662">
    <property type="term" value="F:ATP-dependent protein folding chaperone"/>
    <property type="evidence" value="ECO:0007669"/>
    <property type="project" value="InterPro"/>
</dbReference>
<dbReference type="GO" id="GO:0046983">
    <property type="term" value="F:protein dimerization activity"/>
    <property type="evidence" value="ECO:0007669"/>
    <property type="project" value="InterPro"/>
</dbReference>
<dbReference type="GO" id="GO:0051082">
    <property type="term" value="F:unfolded protein binding"/>
    <property type="evidence" value="ECO:0007669"/>
    <property type="project" value="UniProtKB-UniRule"/>
</dbReference>
<dbReference type="GO" id="GO:0008270">
    <property type="term" value="F:zinc ion binding"/>
    <property type="evidence" value="ECO:0007669"/>
    <property type="project" value="InterPro"/>
</dbReference>
<dbReference type="GO" id="GO:0051301">
    <property type="term" value="P:cell division"/>
    <property type="evidence" value="ECO:0007669"/>
    <property type="project" value="TreeGrafter"/>
</dbReference>
<dbReference type="GO" id="GO:0051603">
    <property type="term" value="P:proteolysis involved in protein catabolic process"/>
    <property type="evidence" value="ECO:0007669"/>
    <property type="project" value="TreeGrafter"/>
</dbReference>
<dbReference type="CDD" id="cd19497">
    <property type="entry name" value="RecA-like_ClpX"/>
    <property type="match status" value="1"/>
</dbReference>
<dbReference type="FunFam" id="1.10.8.60:FF:000002">
    <property type="entry name" value="ATP-dependent Clp protease ATP-binding subunit ClpX"/>
    <property type="match status" value="1"/>
</dbReference>
<dbReference type="FunFam" id="3.40.50.300:FF:000005">
    <property type="entry name" value="ATP-dependent Clp protease ATP-binding subunit ClpX"/>
    <property type="match status" value="1"/>
</dbReference>
<dbReference type="Gene3D" id="1.10.8.60">
    <property type="match status" value="1"/>
</dbReference>
<dbReference type="Gene3D" id="6.20.220.10">
    <property type="entry name" value="ClpX chaperone, C4-type zinc finger domain"/>
    <property type="match status" value="1"/>
</dbReference>
<dbReference type="Gene3D" id="3.40.50.300">
    <property type="entry name" value="P-loop containing nucleotide triphosphate hydrolases"/>
    <property type="match status" value="1"/>
</dbReference>
<dbReference type="HAMAP" id="MF_00175">
    <property type="entry name" value="ClpX"/>
    <property type="match status" value="1"/>
</dbReference>
<dbReference type="InterPro" id="IPR003593">
    <property type="entry name" value="AAA+_ATPase"/>
</dbReference>
<dbReference type="InterPro" id="IPR050052">
    <property type="entry name" value="ATP-dep_Clp_protease_ClpX"/>
</dbReference>
<dbReference type="InterPro" id="IPR003959">
    <property type="entry name" value="ATPase_AAA_core"/>
</dbReference>
<dbReference type="InterPro" id="IPR019489">
    <property type="entry name" value="Clp_ATPase_C"/>
</dbReference>
<dbReference type="InterPro" id="IPR004487">
    <property type="entry name" value="Clp_protease_ATP-bd_su_ClpX"/>
</dbReference>
<dbReference type="InterPro" id="IPR046425">
    <property type="entry name" value="ClpX_bact"/>
</dbReference>
<dbReference type="InterPro" id="IPR027417">
    <property type="entry name" value="P-loop_NTPase"/>
</dbReference>
<dbReference type="InterPro" id="IPR010603">
    <property type="entry name" value="Znf_CppX_C4"/>
</dbReference>
<dbReference type="InterPro" id="IPR038366">
    <property type="entry name" value="Znf_CppX_C4_sf"/>
</dbReference>
<dbReference type="NCBIfam" id="TIGR00382">
    <property type="entry name" value="clpX"/>
    <property type="match status" value="1"/>
</dbReference>
<dbReference type="NCBIfam" id="NF003745">
    <property type="entry name" value="PRK05342.1"/>
    <property type="match status" value="1"/>
</dbReference>
<dbReference type="PANTHER" id="PTHR48102:SF7">
    <property type="entry name" value="ATP-DEPENDENT CLP PROTEASE ATP-BINDING SUBUNIT CLPX-LIKE, MITOCHONDRIAL"/>
    <property type="match status" value="1"/>
</dbReference>
<dbReference type="PANTHER" id="PTHR48102">
    <property type="entry name" value="ATP-DEPENDENT CLP PROTEASE ATP-BINDING SUBUNIT CLPX-LIKE, MITOCHONDRIAL-RELATED"/>
    <property type="match status" value="1"/>
</dbReference>
<dbReference type="Pfam" id="PF07724">
    <property type="entry name" value="AAA_2"/>
    <property type="match status" value="1"/>
</dbReference>
<dbReference type="Pfam" id="PF10431">
    <property type="entry name" value="ClpB_D2-small"/>
    <property type="match status" value="1"/>
</dbReference>
<dbReference type="Pfam" id="PF06689">
    <property type="entry name" value="zf-C4_ClpX"/>
    <property type="match status" value="1"/>
</dbReference>
<dbReference type="SMART" id="SM00382">
    <property type="entry name" value="AAA"/>
    <property type="match status" value="1"/>
</dbReference>
<dbReference type="SMART" id="SM01086">
    <property type="entry name" value="ClpB_D2-small"/>
    <property type="match status" value="1"/>
</dbReference>
<dbReference type="SMART" id="SM00994">
    <property type="entry name" value="zf-C4_ClpX"/>
    <property type="match status" value="1"/>
</dbReference>
<dbReference type="SUPFAM" id="SSF57716">
    <property type="entry name" value="Glucocorticoid receptor-like (DNA-binding domain)"/>
    <property type="match status" value="1"/>
</dbReference>
<dbReference type="SUPFAM" id="SSF52540">
    <property type="entry name" value="P-loop containing nucleoside triphosphate hydrolases"/>
    <property type="match status" value="1"/>
</dbReference>
<dbReference type="PROSITE" id="PS51902">
    <property type="entry name" value="CLPX_ZB"/>
    <property type="match status" value="1"/>
</dbReference>
<proteinExistence type="inferred from homology"/>
<protein>
    <recommendedName>
        <fullName evidence="1">ATP-dependent Clp protease ATP-binding subunit ClpX</fullName>
    </recommendedName>
</protein>
<reference key="1">
    <citation type="submission" date="2007-11" db="EMBL/GenBank/DDBJ databases">
        <title>Complete sequence of Delftia acidovorans DSM 14801 / SPH-1.</title>
        <authorList>
            <person name="Copeland A."/>
            <person name="Lucas S."/>
            <person name="Lapidus A."/>
            <person name="Barry K."/>
            <person name="Glavina del Rio T."/>
            <person name="Dalin E."/>
            <person name="Tice H."/>
            <person name="Pitluck S."/>
            <person name="Lowry S."/>
            <person name="Clum A."/>
            <person name="Schmutz J."/>
            <person name="Larimer F."/>
            <person name="Land M."/>
            <person name="Hauser L."/>
            <person name="Kyrpides N."/>
            <person name="Kim E."/>
            <person name="Schleheck D."/>
            <person name="Richardson P."/>
        </authorList>
    </citation>
    <scope>NUCLEOTIDE SEQUENCE [LARGE SCALE GENOMIC DNA]</scope>
    <source>
        <strain>DSM 14801 / SPH-1</strain>
    </source>
</reference>
<evidence type="ECO:0000255" key="1">
    <source>
        <dbReference type="HAMAP-Rule" id="MF_00175"/>
    </source>
</evidence>
<evidence type="ECO:0000255" key="2">
    <source>
        <dbReference type="PROSITE-ProRule" id="PRU01250"/>
    </source>
</evidence>
<accession>A9C1U9</accession>
<organism>
    <name type="scientific">Delftia acidovorans (strain DSM 14801 / SPH-1)</name>
    <dbReference type="NCBI Taxonomy" id="398578"/>
    <lineage>
        <taxon>Bacteria</taxon>
        <taxon>Pseudomonadati</taxon>
        <taxon>Pseudomonadota</taxon>
        <taxon>Betaproteobacteria</taxon>
        <taxon>Burkholderiales</taxon>
        <taxon>Comamonadaceae</taxon>
        <taxon>Delftia</taxon>
    </lineage>
</organism>
<sequence length="420" mass="45906">MAEKKGSSSEKNLYCTFCGKSQHEVKKLIAGPSVFICDECIDLCNEIIRDEQPSTEAKDGRGDLPTPAEIKANLDNYVIGQDLPKRTLAVAVYNHYKRLRHKDKAGKDEIELAKSNILLIGPTGSGKTLLAQTLARMLNVPFVMADATTLTEAGYVGEDVENIIQKLLQSCEYDVERAQRGIVYIDEIDKISRKSDNPSITRDVSGEGVQQALLKLIEGTMASVPPQGGRKHPNQDFLQIDTTNILFICGGAFAGLEKVIENRTEASGIGFGATVKSKKQRSISEVFQEIEPEDLIKFGIIPELVGRMPVVTALAELGEDALVQILTEPKNALVKQYSKLLAMEGVELEIRPAALKAIARKALARKTGARGLRSILEQSLIGTMYELPNADNVEKVVVDESTIEDGKAPLLVYREAAKKA</sequence>
<name>CLPX_DELAS</name>
<feature type="chain" id="PRO_1000097948" description="ATP-dependent Clp protease ATP-binding subunit ClpX">
    <location>
        <begin position="1"/>
        <end position="420"/>
    </location>
</feature>
<feature type="domain" description="ClpX-type ZB" evidence="2">
    <location>
        <begin position="3"/>
        <end position="56"/>
    </location>
</feature>
<feature type="binding site" evidence="2">
    <location>
        <position position="15"/>
    </location>
    <ligand>
        <name>Zn(2+)</name>
        <dbReference type="ChEBI" id="CHEBI:29105"/>
    </ligand>
</feature>
<feature type="binding site" evidence="2">
    <location>
        <position position="18"/>
    </location>
    <ligand>
        <name>Zn(2+)</name>
        <dbReference type="ChEBI" id="CHEBI:29105"/>
    </ligand>
</feature>
<feature type="binding site" evidence="2">
    <location>
        <position position="37"/>
    </location>
    <ligand>
        <name>Zn(2+)</name>
        <dbReference type="ChEBI" id="CHEBI:29105"/>
    </ligand>
</feature>
<feature type="binding site" evidence="2">
    <location>
        <position position="40"/>
    </location>
    <ligand>
        <name>Zn(2+)</name>
        <dbReference type="ChEBI" id="CHEBI:29105"/>
    </ligand>
</feature>
<feature type="binding site" evidence="1">
    <location>
        <begin position="122"/>
        <end position="129"/>
    </location>
    <ligand>
        <name>ATP</name>
        <dbReference type="ChEBI" id="CHEBI:30616"/>
    </ligand>
</feature>
<gene>
    <name evidence="1" type="primary">clpX</name>
    <name type="ordered locus">Daci_2646</name>
</gene>
<comment type="function">
    <text evidence="1">ATP-dependent specificity component of the Clp protease. It directs the protease to specific substrates. Can perform chaperone functions in the absence of ClpP.</text>
</comment>
<comment type="subunit">
    <text evidence="1">Component of the ClpX-ClpP complex. Forms a hexameric ring that, in the presence of ATP, binds to fourteen ClpP subunits assembled into a disk-like structure with a central cavity, resembling the structure of eukaryotic proteasomes.</text>
</comment>
<comment type="similarity">
    <text evidence="1">Belongs to the ClpX chaperone family.</text>
</comment>